<evidence type="ECO:0000255" key="1">
    <source>
        <dbReference type="HAMAP-Rule" id="MF_01014"/>
    </source>
</evidence>
<comment type="catalytic activity">
    <reaction evidence="1">
        <text>1-(5-phospho-beta-D-ribosyl)-5-[(5-phospho-beta-D-ribosylamino)methylideneamino]imidazole-4-carboxamide = 5-[(5-phospho-1-deoxy-D-ribulos-1-ylimino)methylamino]-1-(5-phospho-beta-D-ribosyl)imidazole-4-carboxamide</text>
        <dbReference type="Rhea" id="RHEA:15469"/>
        <dbReference type="ChEBI" id="CHEBI:58435"/>
        <dbReference type="ChEBI" id="CHEBI:58525"/>
        <dbReference type="EC" id="5.3.1.16"/>
    </reaction>
</comment>
<comment type="pathway">
    <text evidence="1">Amino-acid biosynthesis; L-histidine biosynthesis; L-histidine from 5-phospho-alpha-D-ribose 1-diphosphate: step 4/9.</text>
</comment>
<comment type="subcellular location">
    <subcellularLocation>
        <location evidence="1">Cytoplasm</location>
    </subcellularLocation>
</comment>
<comment type="similarity">
    <text evidence="1">Belongs to the HisA/HisF family.</text>
</comment>
<protein>
    <recommendedName>
        <fullName evidence="1">1-(5-phosphoribosyl)-5-[(5-phosphoribosylamino)methylideneamino] imidazole-4-carboxamide isomerase</fullName>
        <ecNumber evidence="1">5.3.1.16</ecNumber>
    </recommendedName>
    <alternativeName>
        <fullName evidence="1">Phosphoribosylformimino-5-aminoimidazole carboxamide ribotide isomerase</fullName>
    </alternativeName>
</protein>
<feature type="chain" id="PRO_1000084094" description="1-(5-phosphoribosyl)-5-[(5-phosphoribosylamino)methylideneamino] imidazole-4-carboxamide isomerase">
    <location>
        <begin position="1"/>
        <end position="238"/>
    </location>
</feature>
<feature type="active site" description="Proton acceptor" evidence="1">
    <location>
        <position position="8"/>
    </location>
</feature>
<feature type="active site" description="Proton donor" evidence="1">
    <location>
        <position position="129"/>
    </location>
</feature>
<proteinExistence type="inferred from homology"/>
<organism>
    <name type="scientific">Clostridium kluyveri (strain ATCC 8527 / DSM 555 / NBRC 12016 / NCIMB 10680 / K1)</name>
    <dbReference type="NCBI Taxonomy" id="431943"/>
    <lineage>
        <taxon>Bacteria</taxon>
        <taxon>Bacillati</taxon>
        <taxon>Bacillota</taxon>
        <taxon>Clostridia</taxon>
        <taxon>Eubacteriales</taxon>
        <taxon>Clostridiaceae</taxon>
        <taxon>Clostridium</taxon>
    </lineage>
</organism>
<gene>
    <name evidence="1" type="primary">hisA</name>
    <name type="ordered locus">CKL_1299</name>
</gene>
<name>HIS4_CLOK5</name>
<reference key="1">
    <citation type="journal article" date="2008" name="Proc. Natl. Acad. Sci. U.S.A.">
        <title>The genome of Clostridium kluyveri, a strict anaerobe with unique metabolic features.</title>
        <authorList>
            <person name="Seedorf H."/>
            <person name="Fricke W.F."/>
            <person name="Veith B."/>
            <person name="Brueggemann H."/>
            <person name="Liesegang H."/>
            <person name="Strittmatter A."/>
            <person name="Miethke M."/>
            <person name="Buckel W."/>
            <person name="Hinderberger J."/>
            <person name="Li F."/>
            <person name="Hagemeier C."/>
            <person name="Thauer R.K."/>
            <person name="Gottschalk G."/>
        </authorList>
    </citation>
    <scope>NUCLEOTIDE SEQUENCE [LARGE SCALE GENOMIC DNA]</scope>
    <source>
        <strain>ATCC 8527 / DSM 555 / NBRC 12016 / NCIMB 10680 / K1</strain>
    </source>
</reference>
<sequence length="238" mass="25683">MIILPAIDLKGGKCVRLYKGDMNSQEVVARDPFETALKFKSEGAQYLHMVDLDGALKGSGENLDIISKIVKNVDVPIEVGGGIRNIETIDKFIKLGVSRVILGTAALKNKELVIKAVENYDEKIAVGIDAKDGVPAADGWTTLSKTNYIDFGKEMEKIGVQTLIFTDISKDGTLEGTNLEQLLKLKNSVKCNVIASGGIKDIEDIKSLKKENVYGAIVGKAIYAKTLSLKKAIEIGGN</sequence>
<dbReference type="EC" id="5.3.1.16" evidence="1"/>
<dbReference type="EMBL" id="CP000673">
    <property type="protein sequence ID" value="EDK33341.1"/>
    <property type="molecule type" value="Genomic_DNA"/>
</dbReference>
<dbReference type="RefSeq" id="WP_012101686.1">
    <property type="nucleotide sequence ID" value="NC_009706.1"/>
</dbReference>
<dbReference type="SMR" id="A5N7R0"/>
<dbReference type="STRING" id="431943.CKL_1299"/>
<dbReference type="KEGG" id="ckl:CKL_1299"/>
<dbReference type="eggNOG" id="COG0106">
    <property type="taxonomic scope" value="Bacteria"/>
</dbReference>
<dbReference type="HOGENOM" id="CLU_048577_1_2_9"/>
<dbReference type="UniPathway" id="UPA00031">
    <property type="reaction ID" value="UER00009"/>
</dbReference>
<dbReference type="Proteomes" id="UP000002411">
    <property type="component" value="Chromosome"/>
</dbReference>
<dbReference type="GO" id="GO:0005737">
    <property type="term" value="C:cytoplasm"/>
    <property type="evidence" value="ECO:0007669"/>
    <property type="project" value="UniProtKB-SubCell"/>
</dbReference>
<dbReference type="GO" id="GO:0003949">
    <property type="term" value="F:1-(5-phosphoribosyl)-5-[(5-phosphoribosylamino)methylideneamino]imidazole-4-carboxamide isomerase activity"/>
    <property type="evidence" value="ECO:0007669"/>
    <property type="project" value="UniProtKB-UniRule"/>
</dbReference>
<dbReference type="GO" id="GO:0000105">
    <property type="term" value="P:L-histidine biosynthetic process"/>
    <property type="evidence" value="ECO:0007669"/>
    <property type="project" value="UniProtKB-UniRule"/>
</dbReference>
<dbReference type="GO" id="GO:0000162">
    <property type="term" value="P:L-tryptophan biosynthetic process"/>
    <property type="evidence" value="ECO:0007669"/>
    <property type="project" value="TreeGrafter"/>
</dbReference>
<dbReference type="CDD" id="cd04732">
    <property type="entry name" value="HisA"/>
    <property type="match status" value="1"/>
</dbReference>
<dbReference type="FunFam" id="3.20.20.70:FF:000009">
    <property type="entry name" value="1-(5-phosphoribosyl)-5-[(5-phosphoribosylamino)methylideneamino] imidazole-4-carboxamide isomerase"/>
    <property type="match status" value="1"/>
</dbReference>
<dbReference type="Gene3D" id="3.20.20.70">
    <property type="entry name" value="Aldolase class I"/>
    <property type="match status" value="1"/>
</dbReference>
<dbReference type="HAMAP" id="MF_01014">
    <property type="entry name" value="HisA"/>
    <property type="match status" value="1"/>
</dbReference>
<dbReference type="InterPro" id="IPR013785">
    <property type="entry name" value="Aldolase_TIM"/>
</dbReference>
<dbReference type="InterPro" id="IPR006062">
    <property type="entry name" value="His_biosynth"/>
</dbReference>
<dbReference type="InterPro" id="IPR006063">
    <property type="entry name" value="HisA_bact_arch"/>
</dbReference>
<dbReference type="InterPro" id="IPR044524">
    <property type="entry name" value="Isoase_HisA-like"/>
</dbReference>
<dbReference type="InterPro" id="IPR023016">
    <property type="entry name" value="Isoase_HisA-like_bact"/>
</dbReference>
<dbReference type="InterPro" id="IPR011060">
    <property type="entry name" value="RibuloseP-bd_barrel"/>
</dbReference>
<dbReference type="NCBIfam" id="TIGR00007">
    <property type="entry name" value="1-(5-phosphoribosyl)-5-[(5-phosphoribosylamino)methylideneamino]imidazole-4-carboxamide isomerase"/>
    <property type="match status" value="1"/>
</dbReference>
<dbReference type="PANTHER" id="PTHR43090">
    <property type="entry name" value="1-(5-PHOSPHORIBOSYL)-5-[(5-PHOSPHORIBOSYLAMINO)METHYLIDENEAMINO] IMIDAZOLE-4-CARBOXAMIDE ISOMERASE"/>
    <property type="match status" value="1"/>
</dbReference>
<dbReference type="PANTHER" id="PTHR43090:SF2">
    <property type="entry name" value="1-(5-PHOSPHORIBOSYL)-5-[(5-PHOSPHORIBOSYLAMINO)METHYLIDENEAMINO] IMIDAZOLE-4-CARBOXAMIDE ISOMERASE"/>
    <property type="match status" value="1"/>
</dbReference>
<dbReference type="Pfam" id="PF00977">
    <property type="entry name" value="His_biosynth"/>
    <property type="match status" value="1"/>
</dbReference>
<dbReference type="SUPFAM" id="SSF51366">
    <property type="entry name" value="Ribulose-phoshate binding barrel"/>
    <property type="match status" value="1"/>
</dbReference>
<keyword id="KW-0028">Amino-acid biosynthesis</keyword>
<keyword id="KW-0963">Cytoplasm</keyword>
<keyword id="KW-0368">Histidine biosynthesis</keyword>
<keyword id="KW-0413">Isomerase</keyword>
<keyword id="KW-1185">Reference proteome</keyword>
<accession>A5N7R0</accession>